<name>DRUE_ECOU4</name>
<reference key="1">
    <citation type="submission" date="2013-07" db="EMBL/GenBank/DDBJ databases">
        <title>The Genome Sequence of Escherichia coli UMEA 4076-1.</title>
        <authorList>
            <consortium name="The Broad Institute Genome Sequencing Platform"/>
            <consortium name="The Broad Institute Genome Sequencing Center for Infectious Disease"/>
            <person name="Feldgarden M."/>
            <person name="Frimodt-Moller N."/>
            <person name="Leihof R.F."/>
            <person name="Rasmussen L."/>
            <person name="Young S.K."/>
            <person name="Zeng Q."/>
            <person name="Gargeya S."/>
            <person name="Abouelleil A."/>
            <person name="Alvarado L."/>
            <person name="Berlin A.M."/>
            <person name="Chapman S.B."/>
            <person name="Gainer-Dewar J."/>
            <person name="Goldberg J."/>
            <person name="Gnerre S."/>
            <person name="Griggs A."/>
            <person name="Gujja S."/>
            <person name="Hansen M."/>
            <person name="Howarth C."/>
            <person name="Imamovic A."/>
            <person name="Larimer J."/>
            <person name="McCowan C."/>
            <person name="Murphy C."/>
            <person name="Pearson M."/>
            <person name="Poon T."/>
            <person name="Priest M."/>
            <person name="Roberts A."/>
            <person name="Saif S."/>
            <person name="Shea T."/>
            <person name="Sykes S."/>
            <person name="Wortman J."/>
            <person name="Nusbaum C."/>
            <person name="Birren B."/>
        </authorList>
    </citation>
    <scope>NUCLEOTIDE SEQUENCE [LARGE SCALE GENOMIC DNA]</scope>
    <source>
        <strain>UMEA 4076-1</strain>
    </source>
</reference>
<reference key="2">
    <citation type="journal article" date="2018" name="Science">
        <title>Systematic discovery of antiphage defense systems in the microbial pangenome.</title>
        <authorList>
            <person name="Doron S."/>
            <person name="Melamed S."/>
            <person name="Ofir G."/>
            <person name="Leavitt A."/>
            <person name="Lopatina A."/>
            <person name="Keren M."/>
            <person name="Amitai G."/>
            <person name="Sorek R."/>
        </authorList>
    </citation>
    <scope>FUNCTION</scope>
    <scope>DISRUPTION PHENOTYPE</scope>
    <source>
        <strain>UMEA 4076-1</strain>
    </source>
</reference>
<protein>
    <recommendedName>
        <fullName evidence="4">Druantia protein DruE</fullName>
    </recommendedName>
    <alternativeName>
        <fullName evidence="5">Probable ATP-dependent helicase DruE</fullName>
    </alternativeName>
</protein>
<evidence type="ECO:0000255" key="1">
    <source>
        <dbReference type="PROSITE-ProRule" id="PRU00541"/>
    </source>
</evidence>
<evidence type="ECO:0000255" key="2">
    <source>
        <dbReference type="PROSITE-ProRule" id="PRU00542"/>
    </source>
</evidence>
<evidence type="ECO:0000269" key="3">
    <source>
    </source>
</evidence>
<evidence type="ECO:0000303" key="4">
    <source>
    </source>
</evidence>
<evidence type="ECO:0000305" key="5"/>
<evidence type="ECO:0000305" key="6">
    <source>
    </source>
</evidence>
<evidence type="ECO:0000312" key="7">
    <source>
        <dbReference type="EMBL" id="ERA40833.1"/>
    </source>
</evidence>
<comment type="function">
    <text evidence="3 6">Component of antiviral defense system Druantia type I, composed of DruA, DruB, DruC, DruD and DruE. Expression of Druantia in E.coli (strain MG1655) confers resistance to phage lambda, SECphi18, SECphi27 and T4 (PubMed:29371424). This protein is probably a helicase (Probable).</text>
</comment>
<comment type="subcellular location">
    <subcellularLocation>
        <location evidence="5">Cytoplasm</location>
    </subcellularLocation>
</comment>
<comment type="disruption phenotype">
    <text evidence="3">When this gene is missing the Druantia system does not confer resistance to SECphi27 in E.coli.</text>
</comment>
<gene>
    <name evidence="4" type="primary">druE</name>
    <name evidence="7" type="ORF">H003_04358</name>
</gene>
<dbReference type="EMBL" id="AWEM01000032">
    <property type="protein sequence ID" value="ERA40833.1"/>
    <property type="molecule type" value="Genomic_DNA"/>
</dbReference>
<dbReference type="RefSeq" id="WP_001519247.1">
    <property type="nucleotide sequence ID" value="NZ_KE702725.1"/>
</dbReference>
<dbReference type="GO" id="GO:0005737">
    <property type="term" value="C:cytoplasm"/>
    <property type="evidence" value="ECO:0007669"/>
    <property type="project" value="UniProtKB-SubCell"/>
</dbReference>
<dbReference type="GO" id="GO:0043138">
    <property type="term" value="F:3'-5' DNA helicase activity"/>
    <property type="evidence" value="ECO:0007669"/>
    <property type="project" value="TreeGrafter"/>
</dbReference>
<dbReference type="GO" id="GO:0005524">
    <property type="term" value="F:ATP binding"/>
    <property type="evidence" value="ECO:0007669"/>
    <property type="project" value="UniProtKB-KW"/>
</dbReference>
<dbReference type="GO" id="GO:0016787">
    <property type="term" value="F:hydrolase activity"/>
    <property type="evidence" value="ECO:0007669"/>
    <property type="project" value="UniProtKB-KW"/>
</dbReference>
<dbReference type="GO" id="GO:0003676">
    <property type="term" value="F:nucleic acid binding"/>
    <property type="evidence" value="ECO:0007669"/>
    <property type="project" value="InterPro"/>
</dbReference>
<dbReference type="GO" id="GO:0051607">
    <property type="term" value="P:defense response to virus"/>
    <property type="evidence" value="ECO:0007669"/>
    <property type="project" value="UniProtKB-KW"/>
</dbReference>
<dbReference type="GO" id="GO:0036297">
    <property type="term" value="P:interstrand cross-link repair"/>
    <property type="evidence" value="ECO:0007669"/>
    <property type="project" value="TreeGrafter"/>
</dbReference>
<dbReference type="GO" id="GO:0006289">
    <property type="term" value="P:nucleotide-excision repair"/>
    <property type="evidence" value="ECO:0007669"/>
    <property type="project" value="TreeGrafter"/>
</dbReference>
<dbReference type="Gene3D" id="3.40.50.300">
    <property type="entry name" value="P-loop containing nucleotide triphosphate hydrolases"/>
    <property type="match status" value="2"/>
</dbReference>
<dbReference type="InterPro" id="IPR011545">
    <property type="entry name" value="DEAD/DEAH_box_helicase_dom"/>
</dbReference>
<dbReference type="InterPro" id="IPR014001">
    <property type="entry name" value="Helicase_ATP-bd"/>
</dbReference>
<dbReference type="InterPro" id="IPR001650">
    <property type="entry name" value="Helicase_C-like"/>
</dbReference>
<dbReference type="InterPro" id="IPR018973">
    <property type="entry name" value="MZB"/>
</dbReference>
<dbReference type="InterPro" id="IPR027417">
    <property type="entry name" value="P-loop_NTPase"/>
</dbReference>
<dbReference type="PANTHER" id="PTHR47957">
    <property type="entry name" value="ATP-DEPENDENT HELICASE HRQ1"/>
    <property type="match status" value="1"/>
</dbReference>
<dbReference type="PANTHER" id="PTHR47957:SF3">
    <property type="entry name" value="ATP-DEPENDENT HELICASE HRQ1"/>
    <property type="match status" value="1"/>
</dbReference>
<dbReference type="Pfam" id="PF00270">
    <property type="entry name" value="DEAD"/>
    <property type="match status" value="1"/>
</dbReference>
<dbReference type="Pfam" id="PF00271">
    <property type="entry name" value="Helicase_C"/>
    <property type="match status" value="1"/>
</dbReference>
<dbReference type="Pfam" id="PF09369">
    <property type="entry name" value="MZB"/>
    <property type="match status" value="1"/>
</dbReference>
<dbReference type="SMART" id="SM00487">
    <property type="entry name" value="DEXDc"/>
    <property type="match status" value="1"/>
</dbReference>
<dbReference type="SMART" id="SM00490">
    <property type="entry name" value="HELICc"/>
    <property type="match status" value="1"/>
</dbReference>
<dbReference type="SUPFAM" id="SSF52540">
    <property type="entry name" value="P-loop containing nucleoside triphosphate hydrolases"/>
    <property type="match status" value="2"/>
</dbReference>
<dbReference type="PROSITE" id="PS51192">
    <property type="entry name" value="HELICASE_ATP_BIND_1"/>
    <property type="match status" value="1"/>
</dbReference>
<dbReference type="PROSITE" id="PS51194">
    <property type="entry name" value="HELICASE_CTER"/>
    <property type="match status" value="1"/>
</dbReference>
<feature type="chain" id="PRO_0000456319" description="Druantia protein DruE">
    <location>
        <begin position="1"/>
        <end position="1836"/>
    </location>
</feature>
<feature type="domain" description="Helicase ATP-binding" evidence="1">
    <location>
        <begin position="108"/>
        <end position="405"/>
    </location>
</feature>
<feature type="domain" description="Helicase C-terminal" evidence="2">
    <location>
        <begin position="1014"/>
        <end position="1199"/>
    </location>
</feature>
<feature type="short sequence motif" description="DEAH box" evidence="1">
    <location>
        <begin position="347"/>
        <end position="350"/>
    </location>
</feature>
<feature type="binding site" evidence="1">
    <location>
        <begin position="121"/>
        <end position="128"/>
    </location>
    <ligand>
        <name>ATP</name>
        <dbReference type="ChEBI" id="CHEBI:30616"/>
    </ligand>
</feature>
<accession>P0DW38</accession>
<keyword id="KW-0051">Antiviral defense</keyword>
<keyword id="KW-0067">ATP-binding</keyword>
<keyword id="KW-0963">Cytoplasm</keyword>
<keyword id="KW-0347">Helicase</keyword>
<keyword id="KW-0378">Hydrolase</keyword>
<keyword id="KW-0547">Nucleotide-binding</keyword>
<proteinExistence type="predicted"/>
<organism>
    <name type="scientific">Escherichia coli (strain UMEA 4076-1)</name>
    <dbReference type="NCBI Taxonomy" id="1281278"/>
    <lineage>
        <taxon>Bacteria</taxon>
        <taxon>Pseudomonadati</taxon>
        <taxon>Pseudomonadota</taxon>
        <taxon>Gammaproteobacteria</taxon>
        <taxon>Enterobacterales</taxon>
        <taxon>Enterobacteriaceae</taxon>
        <taxon>Escherichia</taxon>
    </lineage>
</organism>
<sequence length="1836" mass="206036">MINKNKVTERSGIHDTVKSLSENLRKYIEAQYHIRDEGLIAERRALLQQNETIAQAPYIEATPIYEPGAPYSELPIPEAASNVLTQLSELGIGLYQRPYKHQSQALESFLGEDASDLVIATGTGSGKTESFLMPIIGKLAIESSERPKSASLPGCRAILLYPMNALVNDQLARIRRLFGDSEASKILRSGRCAPVRFGAYTGRTPYPGRRSSRRDELFIKPLFDEFYNKLANNAPVRAELNRIGRWPSKDLDAFYGQSASQAKTYVSGKKTGKQFVLNNWGERLITQPEDRELMTRHEMQNRCPELLITNYSMLEYMLMRPIERNIFEQTKEWLKADEMNELILVLDEAHMYRGAGGAEVALLIRRLCARLDIPRERMRCILTSASLGSIEDGERFAQDLTGLSPTSSRKFRIIEGTRESRPESQIVTSKEANALAEFDLNSFQCVAEDLESAYAAIESLAERMGWQKPMIKDHSTLRNWLFDNLTGFGPIETLIEIVSGKAVKLNILSENLFPDSPQQIAERATDALLALGCYAQRASDGRVLIPTRMHLFYRGLPGLYACIDPDCNQRLGNHSGPTILGRLYTKPLDQCKCASKGRVYELFTHRDCGAAFIRGYVSSEMDFVWHQPNGPLSEDEDIDLVPIDILVEETPHVHSDYQDRWLHIATGRLSKQCQDEDSGYRKVFIPDRVKSGSEITFDECPVCMRKTRSAQNEPSKIMDHVTKGEAPFTTLVRTQISHQPASRPIDGKHPNGGKKVLIFSDGRQKAARLARDIPRDIELDLFRQSIALACSKLKDINREPKPTSVLYLAFLSVLSEHDLLIFDGEDSRKVVMARDEFYRDYNSDLAQAFDDNFSPQESPSRYKIALLKLLCSNYYSLSGTTVGFVEPSQLKSKKMWEDVQSKKLNIESKDVHALAVAWIDTLLTEFAFDESIDSTLRIKAAGFYKPTWGSQGRFGKALRKTLIQHPAMGELYVEVLEEIFRTHLTLGKDGVYFLAPNALRLKIDLLHVWKQCNDCTALMPFALEHSTCLACGSNSVKTVEPSESSYINARKGFWRSPVEEVLVSNSRLLNLSVEEHTAQLSHRDRASVHATTELYELRFQDVLINDNDKPIDVLSCTTTMEVGVDIGSLVAVALRNVPPQRENYQQRAGRAGRRGASVSTVVTYSQNGPHDSYYFLNPERIVAGSPRTPEVKVNNPKIARRHVHSFLVQTFFHELMEQGIYNPTEKTAILEKALGTTRDFFHGAKDTGLNLDSFNNWVKNRILSTNGDLRTSVAAWLPPVLETGGLSASDWFAKVAEEFLNTLHGLAEIVPQIAALVDEENEDDEQTSGGMKFAQEELLEFLFYHGLLPSYAFPTSLCSFLVEKIVKNIRGSFEVRTVQQPQQSISQALSEYAPGRLIVIDRKTYRSGGVFSNALKGELNRARKLFNNPKKFIHCDKCSFVRDPHNNQNSENTCPICGGILKVEIMIQPEVFGPENAKELNEDDREQEITYVTAAQYPQPVDPEDFKFNNGGAHIVFTHAIDQKLVTVNRGKNEGGSSGFSVCCECGAASVYDSYSPAKGAHERPYKYIATKETPRLCSGEYKRVFLGHDFRTDLLLLRITVGSPLVTDTSNAIVLRMYEDALYTIAEALRLAASRHKQLDLDPAEFGSGFRILPTIEEDTQALDLFLYDTLSGGAGYAEVAAANLDDILTATLALLEGCECDTSCTDCLNHFHNQHIQSRLDRKLGASLLRYALYGMVPRCASPDIQVEKLSQLRASLELDGFQCLIKGTQEAPMIVSLNDRSVAVGSYPGLIDRPDFQHDVYKSKNTNAHIAFNEYLLRSNLPQAHQNIRKLLR</sequence>